<gene>
    <name evidence="1" type="primary">sucC</name>
    <name type="ordered locus">Sden_2181</name>
</gene>
<reference key="1">
    <citation type="submission" date="2006-03" db="EMBL/GenBank/DDBJ databases">
        <title>Complete sequence of Shewanella denitrificans OS217.</title>
        <authorList>
            <consortium name="US DOE Joint Genome Institute"/>
            <person name="Copeland A."/>
            <person name="Lucas S."/>
            <person name="Lapidus A."/>
            <person name="Barry K."/>
            <person name="Detter J.C."/>
            <person name="Glavina del Rio T."/>
            <person name="Hammon N."/>
            <person name="Israni S."/>
            <person name="Dalin E."/>
            <person name="Tice H."/>
            <person name="Pitluck S."/>
            <person name="Brettin T."/>
            <person name="Bruce D."/>
            <person name="Han C."/>
            <person name="Tapia R."/>
            <person name="Gilna P."/>
            <person name="Kiss H."/>
            <person name="Schmutz J."/>
            <person name="Larimer F."/>
            <person name="Land M."/>
            <person name="Hauser L."/>
            <person name="Kyrpides N."/>
            <person name="Lykidis A."/>
            <person name="Richardson P."/>
        </authorList>
    </citation>
    <scope>NUCLEOTIDE SEQUENCE [LARGE SCALE GENOMIC DNA]</scope>
    <source>
        <strain>OS217 / ATCC BAA-1090 / DSM 15013</strain>
    </source>
</reference>
<feature type="chain" id="PRO_1000082221" description="Succinate--CoA ligase [ADP-forming] subunit beta">
    <location>
        <begin position="1"/>
        <end position="388"/>
    </location>
</feature>
<feature type="domain" description="ATP-grasp" evidence="1">
    <location>
        <begin position="9"/>
        <end position="244"/>
    </location>
</feature>
<feature type="binding site" evidence="1">
    <location>
        <position position="46"/>
    </location>
    <ligand>
        <name>ATP</name>
        <dbReference type="ChEBI" id="CHEBI:30616"/>
    </ligand>
</feature>
<feature type="binding site" evidence="1">
    <location>
        <begin position="53"/>
        <end position="55"/>
    </location>
    <ligand>
        <name>ATP</name>
        <dbReference type="ChEBI" id="CHEBI:30616"/>
    </ligand>
</feature>
<feature type="binding site" evidence="1">
    <location>
        <position position="99"/>
    </location>
    <ligand>
        <name>ATP</name>
        <dbReference type="ChEBI" id="CHEBI:30616"/>
    </ligand>
</feature>
<feature type="binding site" evidence="1">
    <location>
        <position position="102"/>
    </location>
    <ligand>
        <name>ATP</name>
        <dbReference type="ChEBI" id="CHEBI:30616"/>
    </ligand>
</feature>
<feature type="binding site" evidence="1">
    <location>
        <position position="107"/>
    </location>
    <ligand>
        <name>ATP</name>
        <dbReference type="ChEBI" id="CHEBI:30616"/>
    </ligand>
</feature>
<feature type="binding site" evidence="1">
    <location>
        <position position="199"/>
    </location>
    <ligand>
        <name>Mg(2+)</name>
        <dbReference type="ChEBI" id="CHEBI:18420"/>
    </ligand>
</feature>
<feature type="binding site" evidence="1">
    <location>
        <position position="213"/>
    </location>
    <ligand>
        <name>Mg(2+)</name>
        <dbReference type="ChEBI" id="CHEBI:18420"/>
    </ligand>
</feature>
<feature type="binding site" evidence="1">
    <location>
        <position position="264"/>
    </location>
    <ligand>
        <name>substrate</name>
        <note>ligand shared with subunit alpha</note>
    </ligand>
</feature>
<feature type="binding site" evidence="1">
    <location>
        <begin position="321"/>
        <end position="323"/>
    </location>
    <ligand>
        <name>substrate</name>
        <note>ligand shared with subunit alpha</note>
    </ligand>
</feature>
<keyword id="KW-0067">ATP-binding</keyword>
<keyword id="KW-0436">Ligase</keyword>
<keyword id="KW-0460">Magnesium</keyword>
<keyword id="KW-0479">Metal-binding</keyword>
<keyword id="KW-0547">Nucleotide-binding</keyword>
<keyword id="KW-1185">Reference proteome</keyword>
<keyword id="KW-0816">Tricarboxylic acid cycle</keyword>
<proteinExistence type="inferred from homology"/>
<sequence>MNLHEYQAKSLFAEYGLPVSEGFACDTAQEAVEAAGHIGGDMWVVKCQVHAGGRGKAGGVKVTSSKDEIRAFAENWLGKNLVTYQTDAKGQPVAKILVESCTDIANELYLGAVVDRSTRRVVFMASTEGGVDIETVAEHTPELIHTAIIDPLTGPQAYQARDLGFKLGLNPTQMKQFTKIFMGLANMFNDHDFALLEINPLVITTEGNLHCLDGKIGIDGNALFRQPKIKAMHDPSQDDAREAHAAKFELNYVALDGNVGCMVNGAGLAMGTMDIVNLHGGKPANFLDVGGGATKERVAEAFKIILSDSNVKAVLVNIFGGIVRCDMIAEGIIGAVKEVGVKVPVVVRLEGTNAELGREVLAKSGLDIIAATSLTDAAEQVVKAAEGK</sequence>
<comment type="function">
    <text evidence="1">Succinyl-CoA synthetase functions in the citric acid cycle (TCA), coupling the hydrolysis of succinyl-CoA to the synthesis of either ATP or GTP and thus represents the only step of substrate-level phosphorylation in the TCA. The beta subunit provides nucleotide specificity of the enzyme and binds the substrate succinate, while the binding sites for coenzyme A and phosphate are found in the alpha subunit.</text>
</comment>
<comment type="catalytic activity">
    <reaction evidence="1">
        <text>succinate + ATP + CoA = succinyl-CoA + ADP + phosphate</text>
        <dbReference type="Rhea" id="RHEA:17661"/>
        <dbReference type="ChEBI" id="CHEBI:30031"/>
        <dbReference type="ChEBI" id="CHEBI:30616"/>
        <dbReference type="ChEBI" id="CHEBI:43474"/>
        <dbReference type="ChEBI" id="CHEBI:57287"/>
        <dbReference type="ChEBI" id="CHEBI:57292"/>
        <dbReference type="ChEBI" id="CHEBI:456216"/>
        <dbReference type="EC" id="6.2.1.5"/>
    </reaction>
    <physiologicalReaction direction="right-to-left" evidence="1">
        <dbReference type="Rhea" id="RHEA:17663"/>
    </physiologicalReaction>
</comment>
<comment type="catalytic activity">
    <reaction evidence="1">
        <text>GTP + succinate + CoA = succinyl-CoA + GDP + phosphate</text>
        <dbReference type="Rhea" id="RHEA:22120"/>
        <dbReference type="ChEBI" id="CHEBI:30031"/>
        <dbReference type="ChEBI" id="CHEBI:37565"/>
        <dbReference type="ChEBI" id="CHEBI:43474"/>
        <dbReference type="ChEBI" id="CHEBI:57287"/>
        <dbReference type="ChEBI" id="CHEBI:57292"/>
        <dbReference type="ChEBI" id="CHEBI:58189"/>
    </reaction>
    <physiologicalReaction direction="right-to-left" evidence="1">
        <dbReference type="Rhea" id="RHEA:22122"/>
    </physiologicalReaction>
</comment>
<comment type="cofactor">
    <cofactor evidence="1">
        <name>Mg(2+)</name>
        <dbReference type="ChEBI" id="CHEBI:18420"/>
    </cofactor>
    <text evidence="1">Binds 1 Mg(2+) ion per subunit.</text>
</comment>
<comment type="pathway">
    <text evidence="1">Carbohydrate metabolism; tricarboxylic acid cycle; succinate from succinyl-CoA (ligase route): step 1/1.</text>
</comment>
<comment type="subunit">
    <text evidence="1">Heterotetramer of two alpha and two beta subunits.</text>
</comment>
<comment type="similarity">
    <text evidence="1">Belongs to the succinate/malate CoA ligase beta subunit family.</text>
</comment>
<dbReference type="EC" id="6.2.1.5" evidence="1"/>
<dbReference type="EMBL" id="CP000302">
    <property type="protein sequence ID" value="ABE55463.1"/>
    <property type="molecule type" value="Genomic_DNA"/>
</dbReference>
<dbReference type="RefSeq" id="WP_011496616.1">
    <property type="nucleotide sequence ID" value="NC_007954.1"/>
</dbReference>
<dbReference type="SMR" id="Q12M63"/>
<dbReference type="STRING" id="318161.Sden_2181"/>
<dbReference type="KEGG" id="sdn:Sden_2181"/>
<dbReference type="eggNOG" id="COG0045">
    <property type="taxonomic scope" value="Bacteria"/>
</dbReference>
<dbReference type="HOGENOM" id="CLU_037430_0_2_6"/>
<dbReference type="OrthoDB" id="9802602at2"/>
<dbReference type="UniPathway" id="UPA00223">
    <property type="reaction ID" value="UER00999"/>
</dbReference>
<dbReference type="Proteomes" id="UP000001982">
    <property type="component" value="Chromosome"/>
</dbReference>
<dbReference type="GO" id="GO:0005829">
    <property type="term" value="C:cytosol"/>
    <property type="evidence" value="ECO:0007669"/>
    <property type="project" value="TreeGrafter"/>
</dbReference>
<dbReference type="GO" id="GO:0042709">
    <property type="term" value="C:succinate-CoA ligase complex"/>
    <property type="evidence" value="ECO:0007669"/>
    <property type="project" value="TreeGrafter"/>
</dbReference>
<dbReference type="GO" id="GO:0005524">
    <property type="term" value="F:ATP binding"/>
    <property type="evidence" value="ECO:0007669"/>
    <property type="project" value="UniProtKB-UniRule"/>
</dbReference>
<dbReference type="GO" id="GO:0000287">
    <property type="term" value="F:magnesium ion binding"/>
    <property type="evidence" value="ECO:0007669"/>
    <property type="project" value="UniProtKB-UniRule"/>
</dbReference>
<dbReference type="GO" id="GO:0004775">
    <property type="term" value="F:succinate-CoA ligase (ADP-forming) activity"/>
    <property type="evidence" value="ECO:0007669"/>
    <property type="project" value="UniProtKB-UniRule"/>
</dbReference>
<dbReference type="GO" id="GO:0004776">
    <property type="term" value="F:succinate-CoA ligase (GDP-forming) activity"/>
    <property type="evidence" value="ECO:0007669"/>
    <property type="project" value="RHEA"/>
</dbReference>
<dbReference type="GO" id="GO:0006104">
    <property type="term" value="P:succinyl-CoA metabolic process"/>
    <property type="evidence" value="ECO:0007669"/>
    <property type="project" value="TreeGrafter"/>
</dbReference>
<dbReference type="GO" id="GO:0006099">
    <property type="term" value="P:tricarboxylic acid cycle"/>
    <property type="evidence" value="ECO:0007669"/>
    <property type="project" value="UniProtKB-UniRule"/>
</dbReference>
<dbReference type="FunFam" id="3.30.1490.20:FF:000002">
    <property type="entry name" value="Succinate--CoA ligase [ADP-forming] subunit beta"/>
    <property type="match status" value="1"/>
</dbReference>
<dbReference type="FunFam" id="3.30.470.20:FF:000002">
    <property type="entry name" value="Succinate--CoA ligase [ADP-forming] subunit beta"/>
    <property type="match status" value="1"/>
</dbReference>
<dbReference type="FunFam" id="3.40.50.261:FF:000001">
    <property type="entry name" value="Succinate--CoA ligase [ADP-forming] subunit beta"/>
    <property type="match status" value="1"/>
</dbReference>
<dbReference type="Gene3D" id="3.30.1490.20">
    <property type="entry name" value="ATP-grasp fold, A domain"/>
    <property type="match status" value="1"/>
</dbReference>
<dbReference type="Gene3D" id="3.30.470.20">
    <property type="entry name" value="ATP-grasp fold, B domain"/>
    <property type="match status" value="1"/>
</dbReference>
<dbReference type="Gene3D" id="3.40.50.261">
    <property type="entry name" value="Succinyl-CoA synthetase domains"/>
    <property type="match status" value="1"/>
</dbReference>
<dbReference type="HAMAP" id="MF_00558">
    <property type="entry name" value="Succ_CoA_beta"/>
    <property type="match status" value="1"/>
</dbReference>
<dbReference type="InterPro" id="IPR011761">
    <property type="entry name" value="ATP-grasp"/>
</dbReference>
<dbReference type="InterPro" id="IPR013650">
    <property type="entry name" value="ATP-grasp_succ-CoA_synth-type"/>
</dbReference>
<dbReference type="InterPro" id="IPR013815">
    <property type="entry name" value="ATP_grasp_subdomain_1"/>
</dbReference>
<dbReference type="InterPro" id="IPR017866">
    <property type="entry name" value="Succ-CoA_synthase_bsu_CS"/>
</dbReference>
<dbReference type="InterPro" id="IPR005811">
    <property type="entry name" value="SUCC_ACL_C"/>
</dbReference>
<dbReference type="InterPro" id="IPR005809">
    <property type="entry name" value="Succ_CoA_ligase-like_bsu"/>
</dbReference>
<dbReference type="InterPro" id="IPR016102">
    <property type="entry name" value="Succinyl-CoA_synth-like"/>
</dbReference>
<dbReference type="NCBIfam" id="NF001913">
    <property type="entry name" value="PRK00696.1"/>
    <property type="match status" value="1"/>
</dbReference>
<dbReference type="NCBIfam" id="TIGR01016">
    <property type="entry name" value="sucCoAbeta"/>
    <property type="match status" value="1"/>
</dbReference>
<dbReference type="PANTHER" id="PTHR11815:SF10">
    <property type="entry name" value="SUCCINATE--COA LIGASE [GDP-FORMING] SUBUNIT BETA, MITOCHONDRIAL"/>
    <property type="match status" value="1"/>
</dbReference>
<dbReference type="PANTHER" id="PTHR11815">
    <property type="entry name" value="SUCCINYL-COA SYNTHETASE BETA CHAIN"/>
    <property type="match status" value="1"/>
</dbReference>
<dbReference type="Pfam" id="PF08442">
    <property type="entry name" value="ATP-grasp_2"/>
    <property type="match status" value="1"/>
</dbReference>
<dbReference type="Pfam" id="PF00549">
    <property type="entry name" value="Ligase_CoA"/>
    <property type="match status" value="1"/>
</dbReference>
<dbReference type="PIRSF" id="PIRSF001554">
    <property type="entry name" value="SucCS_beta"/>
    <property type="match status" value="1"/>
</dbReference>
<dbReference type="SUPFAM" id="SSF56059">
    <property type="entry name" value="Glutathione synthetase ATP-binding domain-like"/>
    <property type="match status" value="1"/>
</dbReference>
<dbReference type="SUPFAM" id="SSF52210">
    <property type="entry name" value="Succinyl-CoA synthetase domains"/>
    <property type="match status" value="1"/>
</dbReference>
<dbReference type="PROSITE" id="PS50975">
    <property type="entry name" value="ATP_GRASP"/>
    <property type="match status" value="1"/>
</dbReference>
<dbReference type="PROSITE" id="PS01217">
    <property type="entry name" value="SUCCINYL_COA_LIG_3"/>
    <property type="match status" value="1"/>
</dbReference>
<accession>Q12M63</accession>
<protein>
    <recommendedName>
        <fullName evidence="1">Succinate--CoA ligase [ADP-forming] subunit beta</fullName>
        <ecNumber evidence="1">6.2.1.5</ecNumber>
    </recommendedName>
    <alternativeName>
        <fullName evidence="1">Succinyl-CoA synthetase subunit beta</fullName>
        <shortName evidence="1">SCS-beta</shortName>
    </alternativeName>
</protein>
<evidence type="ECO:0000255" key="1">
    <source>
        <dbReference type="HAMAP-Rule" id="MF_00558"/>
    </source>
</evidence>
<organism>
    <name type="scientific">Shewanella denitrificans (strain OS217 / ATCC BAA-1090 / DSM 15013)</name>
    <dbReference type="NCBI Taxonomy" id="318161"/>
    <lineage>
        <taxon>Bacteria</taxon>
        <taxon>Pseudomonadati</taxon>
        <taxon>Pseudomonadota</taxon>
        <taxon>Gammaproteobacteria</taxon>
        <taxon>Alteromonadales</taxon>
        <taxon>Shewanellaceae</taxon>
        <taxon>Shewanella</taxon>
    </lineage>
</organism>
<name>SUCC_SHEDO</name>